<keyword id="KW-0963">Cytoplasm</keyword>
<keyword id="KW-0539">Nucleus</keyword>
<keyword id="KW-1185">Reference proteome</keyword>
<keyword id="KW-0819">tRNA processing</keyword>
<protein>
    <recommendedName>
        <fullName evidence="4">EKC/KEOPS complex subunit Lage3</fullName>
    </recommendedName>
    <alternativeName>
        <fullName evidence="1">ITBA2 protein homolog</fullName>
    </alternativeName>
    <alternativeName>
        <fullName>L antigen family member 3</fullName>
    </alternativeName>
</protein>
<feature type="chain" id="PRO_0000218925" description="EKC/KEOPS complex subunit Lage3">
    <location>
        <begin position="1"/>
        <end position="148"/>
    </location>
</feature>
<feature type="region of interest" description="Disordered" evidence="2">
    <location>
        <begin position="1"/>
        <end position="21"/>
    </location>
</feature>
<comment type="function">
    <text evidence="1">Component of the EKC/KEOPS complex that is required for the formation of a threonylcarbamoyl group on adenosine at position 37 (t(6)A37) in tRNAs that read codons beginning with adenine. The complex is probably involved in the transfer of the threonylcarbamoyl moiety of threonylcarbamoyl-AMP (TC-AMP) to the N6 group of A37. LAGE3 functions as a dimerization module for the complex.</text>
</comment>
<comment type="subunit">
    <text evidence="1">Component of the EKC/KEOPS complex composed of at least GON7, TP53RK, TPRKB, OSGEP and LAGE3; the whole complex dimerizes.</text>
</comment>
<comment type="subcellular location">
    <subcellularLocation>
        <location evidence="1">Cytoplasm</location>
    </subcellularLocation>
    <subcellularLocation>
        <location evidence="1">Nucleus</location>
    </subcellularLocation>
</comment>
<comment type="disruption phenotype">
    <text evidence="3">Mouse embryos display primary microcephaly characterized by significantly shorter cortex lengths, cortex-midbrain midline lengths and cortex widths. Mice do not show a renal phenotype.</text>
</comment>
<comment type="similarity">
    <text evidence="4">Belongs to the CTAG/PCC1 family.</text>
</comment>
<reference key="1">
    <citation type="journal article" date="2005" name="Science">
        <title>The transcriptional landscape of the mammalian genome.</title>
        <authorList>
            <person name="Carninci P."/>
            <person name="Kasukawa T."/>
            <person name="Katayama S."/>
            <person name="Gough J."/>
            <person name="Frith M.C."/>
            <person name="Maeda N."/>
            <person name="Oyama R."/>
            <person name="Ravasi T."/>
            <person name="Lenhard B."/>
            <person name="Wells C."/>
            <person name="Kodzius R."/>
            <person name="Shimokawa K."/>
            <person name="Bajic V.B."/>
            <person name="Brenner S.E."/>
            <person name="Batalov S."/>
            <person name="Forrest A.R."/>
            <person name="Zavolan M."/>
            <person name="Davis M.J."/>
            <person name="Wilming L.G."/>
            <person name="Aidinis V."/>
            <person name="Allen J.E."/>
            <person name="Ambesi-Impiombato A."/>
            <person name="Apweiler R."/>
            <person name="Aturaliya R.N."/>
            <person name="Bailey T.L."/>
            <person name="Bansal M."/>
            <person name="Baxter L."/>
            <person name="Beisel K.W."/>
            <person name="Bersano T."/>
            <person name="Bono H."/>
            <person name="Chalk A.M."/>
            <person name="Chiu K.P."/>
            <person name="Choudhary V."/>
            <person name="Christoffels A."/>
            <person name="Clutterbuck D.R."/>
            <person name="Crowe M.L."/>
            <person name="Dalla E."/>
            <person name="Dalrymple B.P."/>
            <person name="de Bono B."/>
            <person name="Della Gatta G."/>
            <person name="di Bernardo D."/>
            <person name="Down T."/>
            <person name="Engstrom P."/>
            <person name="Fagiolini M."/>
            <person name="Faulkner G."/>
            <person name="Fletcher C.F."/>
            <person name="Fukushima T."/>
            <person name="Furuno M."/>
            <person name="Futaki S."/>
            <person name="Gariboldi M."/>
            <person name="Georgii-Hemming P."/>
            <person name="Gingeras T.R."/>
            <person name="Gojobori T."/>
            <person name="Green R.E."/>
            <person name="Gustincich S."/>
            <person name="Harbers M."/>
            <person name="Hayashi Y."/>
            <person name="Hensch T.K."/>
            <person name="Hirokawa N."/>
            <person name="Hill D."/>
            <person name="Huminiecki L."/>
            <person name="Iacono M."/>
            <person name="Ikeo K."/>
            <person name="Iwama A."/>
            <person name="Ishikawa T."/>
            <person name="Jakt M."/>
            <person name="Kanapin A."/>
            <person name="Katoh M."/>
            <person name="Kawasawa Y."/>
            <person name="Kelso J."/>
            <person name="Kitamura H."/>
            <person name="Kitano H."/>
            <person name="Kollias G."/>
            <person name="Krishnan S.P."/>
            <person name="Kruger A."/>
            <person name="Kummerfeld S.K."/>
            <person name="Kurochkin I.V."/>
            <person name="Lareau L.F."/>
            <person name="Lazarevic D."/>
            <person name="Lipovich L."/>
            <person name="Liu J."/>
            <person name="Liuni S."/>
            <person name="McWilliam S."/>
            <person name="Madan Babu M."/>
            <person name="Madera M."/>
            <person name="Marchionni L."/>
            <person name="Matsuda H."/>
            <person name="Matsuzawa S."/>
            <person name="Miki H."/>
            <person name="Mignone F."/>
            <person name="Miyake S."/>
            <person name="Morris K."/>
            <person name="Mottagui-Tabar S."/>
            <person name="Mulder N."/>
            <person name="Nakano N."/>
            <person name="Nakauchi H."/>
            <person name="Ng P."/>
            <person name="Nilsson R."/>
            <person name="Nishiguchi S."/>
            <person name="Nishikawa S."/>
            <person name="Nori F."/>
            <person name="Ohara O."/>
            <person name="Okazaki Y."/>
            <person name="Orlando V."/>
            <person name="Pang K.C."/>
            <person name="Pavan W.J."/>
            <person name="Pavesi G."/>
            <person name="Pesole G."/>
            <person name="Petrovsky N."/>
            <person name="Piazza S."/>
            <person name="Reed J."/>
            <person name="Reid J.F."/>
            <person name="Ring B.Z."/>
            <person name="Ringwald M."/>
            <person name="Rost B."/>
            <person name="Ruan Y."/>
            <person name="Salzberg S.L."/>
            <person name="Sandelin A."/>
            <person name="Schneider C."/>
            <person name="Schoenbach C."/>
            <person name="Sekiguchi K."/>
            <person name="Semple C.A."/>
            <person name="Seno S."/>
            <person name="Sessa L."/>
            <person name="Sheng Y."/>
            <person name="Shibata Y."/>
            <person name="Shimada H."/>
            <person name="Shimada K."/>
            <person name="Silva D."/>
            <person name="Sinclair B."/>
            <person name="Sperling S."/>
            <person name="Stupka E."/>
            <person name="Sugiura K."/>
            <person name="Sultana R."/>
            <person name="Takenaka Y."/>
            <person name="Taki K."/>
            <person name="Tammoja K."/>
            <person name="Tan S.L."/>
            <person name="Tang S."/>
            <person name="Taylor M.S."/>
            <person name="Tegner J."/>
            <person name="Teichmann S.A."/>
            <person name="Ueda H.R."/>
            <person name="van Nimwegen E."/>
            <person name="Verardo R."/>
            <person name="Wei C.L."/>
            <person name="Yagi K."/>
            <person name="Yamanishi H."/>
            <person name="Zabarovsky E."/>
            <person name="Zhu S."/>
            <person name="Zimmer A."/>
            <person name="Hide W."/>
            <person name="Bult C."/>
            <person name="Grimmond S.M."/>
            <person name="Teasdale R.D."/>
            <person name="Liu E.T."/>
            <person name="Brusic V."/>
            <person name="Quackenbush J."/>
            <person name="Wahlestedt C."/>
            <person name="Mattick J.S."/>
            <person name="Hume D.A."/>
            <person name="Kai C."/>
            <person name="Sasaki D."/>
            <person name="Tomaru Y."/>
            <person name="Fukuda S."/>
            <person name="Kanamori-Katayama M."/>
            <person name="Suzuki M."/>
            <person name="Aoki J."/>
            <person name="Arakawa T."/>
            <person name="Iida J."/>
            <person name="Imamura K."/>
            <person name="Itoh M."/>
            <person name="Kato T."/>
            <person name="Kawaji H."/>
            <person name="Kawagashira N."/>
            <person name="Kawashima T."/>
            <person name="Kojima M."/>
            <person name="Kondo S."/>
            <person name="Konno H."/>
            <person name="Nakano K."/>
            <person name="Ninomiya N."/>
            <person name="Nishio T."/>
            <person name="Okada M."/>
            <person name="Plessy C."/>
            <person name="Shibata K."/>
            <person name="Shiraki T."/>
            <person name="Suzuki S."/>
            <person name="Tagami M."/>
            <person name="Waki K."/>
            <person name="Watahiki A."/>
            <person name="Okamura-Oho Y."/>
            <person name="Suzuki H."/>
            <person name="Kawai J."/>
            <person name="Hayashizaki Y."/>
        </authorList>
    </citation>
    <scope>NUCLEOTIDE SEQUENCE [LARGE SCALE MRNA]</scope>
    <source>
        <strain>C57BL/6J</strain>
        <tissue>Kidney</tissue>
    </source>
</reference>
<reference key="2">
    <citation type="journal article" date="2017" name="Nat. Genet.">
        <title>Mutations in KEOPS-complex genes cause nephrotic syndrome with primary microcephaly.</title>
        <authorList>
            <person name="Braun D.A."/>
            <person name="Rao J."/>
            <person name="Mollet G."/>
            <person name="Schapiro D."/>
            <person name="Daugeron M.C."/>
            <person name="Tan W."/>
            <person name="Gribouval O."/>
            <person name="Boyer O."/>
            <person name="Revy P."/>
            <person name="Jobst-Schwan T."/>
            <person name="Schmidt J.M."/>
            <person name="Lawson J.A."/>
            <person name="Schanze D."/>
            <person name="Ashraf S."/>
            <person name="Ullmann J.F.P."/>
            <person name="Hoogstraten C.A."/>
            <person name="Boddaert N."/>
            <person name="Collinet B."/>
            <person name="Martin G."/>
            <person name="Liger D."/>
            <person name="Lovric S."/>
            <person name="Furlano M."/>
            <person name="Guerrera I.C."/>
            <person name="Sanchez-Ferras O."/>
            <person name="Hu J.F."/>
            <person name="Boschat A.C."/>
            <person name="Sanquer S."/>
            <person name="Menten B."/>
            <person name="Vergult S."/>
            <person name="De Rocker N."/>
            <person name="Airik M."/>
            <person name="Hermle T."/>
            <person name="Shril S."/>
            <person name="Widmeier E."/>
            <person name="Gee H.Y."/>
            <person name="Choi W.I."/>
            <person name="Sadowski C.E."/>
            <person name="Pabst W.L."/>
            <person name="Warejko J.K."/>
            <person name="Daga A."/>
            <person name="Basta T."/>
            <person name="Matejas V."/>
            <person name="Scharmann K."/>
            <person name="Kienast S.D."/>
            <person name="Behnam B."/>
            <person name="Beeson B."/>
            <person name="Begtrup A."/>
            <person name="Bruce M."/>
            <person name="Ch'ng G.S."/>
            <person name="Lin S.P."/>
            <person name="Chang J.H."/>
            <person name="Chen C.H."/>
            <person name="Cho M.T."/>
            <person name="Gaffney P.M."/>
            <person name="Gipson P.E."/>
            <person name="Hsu C.H."/>
            <person name="Kari J.A."/>
            <person name="Ke Y.Y."/>
            <person name="Kiraly-Borri C."/>
            <person name="Lai W.M."/>
            <person name="Lemyre E."/>
            <person name="Littlejohn R.O."/>
            <person name="Masri A."/>
            <person name="Moghtaderi M."/>
            <person name="Nakamura K."/>
            <person name="Ozaltin F."/>
            <person name="Praet M."/>
            <person name="Prasad C."/>
            <person name="Prytula A."/>
            <person name="Roeder E.R."/>
            <person name="Rump P."/>
            <person name="Schnur R.E."/>
            <person name="Shiihara T."/>
            <person name="Sinha M.D."/>
            <person name="Soliman N.A."/>
            <person name="Soulami K."/>
            <person name="Sweetser D.A."/>
            <person name="Tsai W.H."/>
            <person name="Tsai J.D."/>
            <person name="Topaloglu R."/>
            <person name="Vester U."/>
            <person name="Viskochil D.H."/>
            <person name="Vatanavicharn N."/>
            <person name="Waxler J.L."/>
            <person name="Wierenga K.J."/>
            <person name="Wolf M.T.F."/>
            <person name="Wong S.N."/>
            <person name="Leidel S.A."/>
            <person name="Truglio G."/>
            <person name="Dedon P.C."/>
            <person name="Poduri A."/>
            <person name="Mane S."/>
            <person name="Lifton R.P."/>
            <person name="Bouchard M."/>
            <person name="Kannu P."/>
            <person name="Chitayat D."/>
            <person name="Magen D."/>
            <person name="Callewaert B."/>
            <person name="van Tilbeurgh H."/>
            <person name="Zenker M."/>
            <person name="Antignac C."/>
            <person name="Hildebrandt F."/>
        </authorList>
    </citation>
    <scope>DISRUPTION PHENOTYPE</scope>
</reference>
<accession>Q9CR70</accession>
<evidence type="ECO:0000250" key="1">
    <source>
        <dbReference type="UniProtKB" id="Q14657"/>
    </source>
</evidence>
<evidence type="ECO:0000256" key="2">
    <source>
        <dbReference type="SAM" id="MobiDB-lite"/>
    </source>
</evidence>
<evidence type="ECO:0000269" key="3">
    <source>
    </source>
</evidence>
<evidence type="ECO:0000305" key="4"/>
<evidence type="ECO:0000312" key="5">
    <source>
        <dbReference type="MGI" id="MGI:1913442"/>
    </source>
</evidence>
<organism>
    <name type="scientific">Mus musculus</name>
    <name type="common">Mouse</name>
    <dbReference type="NCBI Taxonomy" id="10090"/>
    <lineage>
        <taxon>Eukaryota</taxon>
        <taxon>Metazoa</taxon>
        <taxon>Chordata</taxon>
        <taxon>Craniata</taxon>
        <taxon>Vertebrata</taxon>
        <taxon>Euteleostomi</taxon>
        <taxon>Mammalia</taxon>
        <taxon>Eutheria</taxon>
        <taxon>Euarchontoglires</taxon>
        <taxon>Glires</taxon>
        <taxon>Rodentia</taxon>
        <taxon>Myomorpha</taxon>
        <taxon>Muroidea</taxon>
        <taxon>Muridae</taxon>
        <taxon>Murinae</taxon>
        <taxon>Mus</taxon>
        <taxon>Mus</taxon>
    </lineage>
</organism>
<proteinExistence type="evidence at transcript level"/>
<name>LAGE3_MOUSE</name>
<sequence length="148" mass="15824">MQTAHTGLSHTADGADGQTSRCCPGNAGTKAVIPSGAHPVARALEASRNSSKSMVPLTQRPGTRHHRFSLFVPFPTSLEAEIACGSLVPDVEPHRGLVGKELKVSGCMLEVRWIAEDSRLLRLSIINFLDQLSLVVNTIQLFGPPVSC</sequence>
<gene>
    <name evidence="5" type="primary">Lage3</name>
    <name evidence="1" type="synonym">Itba2</name>
</gene>
<dbReference type="EMBL" id="AK002539">
    <property type="protein sequence ID" value="BAB22174.1"/>
    <property type="molecule type" value="mRNA"/>
</dbReference>
<dbReference type="EMBL" id="AK004210">
    <property type="protein sequence ID" value="BAB23222.1"/>
    <property type="molecule type" value="mRNA"/>
</dbReference>
<dbReference type="CCDS" id="CCDS30229.1"/>
<dbReference type="RefSeq" id="NP_079686.1">
    <property type="nucleotide sequence ID" value="NM_025410.2"/>
</dbReference>
<dbReference type="SMR" id="Q9CR70"/>
<dbReference type="BioGRID" id="211284">
    <property type="interactions" value="10"/>
</dbReference>
<dbReference type="FunCoup" id="Q9CR70">
    <property type="interactions" value="911"/>
</dbReference>
<dbReference type="STRING" id="10090.ENSMUSP00000015433"/>
<dbReference type="GlyGen" id="Q9CR70">
    <property type="glycosylation" value="1 site, 1 O-linked glycan (1 site)"/>
</dbReference>
<dbReference type="iPTMnet" id="Q9CR70"/>
<dbReference type="PhosphoSitePlus" id="Q9CR70"/>
<dbReference type="SwissPalm" id="Q9CR70"/>
<dbReference type="jPOST" id="Q9CR70"/>
<dbReference type="PaxDb" id="10090-ENSMUSP00000015433"/>
<dbReference type="ProteomicsDB" id="263695"/>
<dbReference type="Pumba" id="Q9CR70"/>
<dbReference type="Antibodypedia" id="31283">
    <property type="antibodies" value="32 antibodies from 18 providers"/>
</dbReference>
<dbReference type="DNASU" id="66192"/>
<dbReference type="Ensembl" id="ENSMUST00000015433.4">
    <property type="protein sequence ID" value="ENSMUSP00000015433.4"/>
    <property type="gene ID" value="ENSMUSG00000015289.5"/>
</dbReference>
<dbReference type="GeneID" id="66192"/>
<dbReference type="KEGG" id="mmu:66192"/>
<dbReference type="UCSC" id="uc009toq.1">
    <property type="organism name" value="mouse"/>
</dbReference>
<dbReference type="AGR" id="MGI:1913442"/>
<dbReference type="CTD" id="8270"/>
<dbReference type="MGI" id="MGI:1913442">
    <property type="gene designation" value="Lage3"/>
</dbReference>
<dbReference type="VEuPathDB" id="HostDB:ENSMUSG00000015289"/>
<dbReference type="eggNOG" id="ENOG502SBSA">
    <property type="taxonomic scope" value="Eukaryota"/>
</dbReference>
<dbReference type="GeneTree" id="ENSGT00410000025802"/>
<dbReference type="HOGENOM" id="CLU_113770_2_2_1"/>
<dbReference type="InParanoid" id="Q9CR70"/>
<dbReference type="OMA" id="WRAEDSH"/>
<dbReference type="OrthoDB" id="10025739at2759"/>
<dbReference type="PhylomeDB" id="Q9CR70"/>
<dbReference type="TreeFam" id="TF337064"/>
<dbReference type="BioGRID-ORCS" id="66192">
    <property type="hits" value="22 hits in 80 CRISPR screens"/>
</dbReference>
<dbReference type="ChiTaRS" id="Lage3">
    <property type="organism name" value="mouse"/>
</dbReference>
<dbReference type="PRO" id="PR:Q9CR70"/>
<dbReference type="Proteomes" id="UP000000589">
    <property type="component" value="Chromosome X"/>
</dbReference>
<dbReference type="RNAct" id="Q9CR70">
    <property type="molecule type" value="protein"/>
</dbReference>
<dbReference type="Bgee" id="ENSMUSG00000015289">
    <property type="expression patterns" value="Expressed in yolk sac and 272 other cell types or tissues"/>
</dbReference>
<dbReference type="ExpressionAtlas" id="Q9CR70">
    <property type="expression patterns" value="baseline and differential"/>
</dbReference>
<dbReference type="GO" id="GO:0005737">
    <property type="term" value="C:cytoplasm"/>
    <property type="evidence" value="ECO:0000250"/>
    <property type="project" value="UniProtKB"/>
</dbReference>
<dbReference type="GO" id="GO:0000408">
    <property type="term" value="C:EKC/KEOPS complex"/>
    <property type="evidence" value="ECO:0000250"/>
    <property type="project" value="UniProtKB"/>
</dbReference>
<dbReference type="GO" id="GO:0005634">
    <property type="term" value="C:nucleus"/>
    <property type="evidence" value="ECO:0000250"/>
    <property type="project" value="UniProtKB"/>
</dbReference>
<dbReference type="GO" id="GO:0008033">
    <property type="term" value="P:tRNA processing"/>
    <property type="evidence" value="ECO:0007669"/>
    <property type="project" value="UniProtKB-KW"/>
</dbReference>
<dbReference type="FunFam" id="3.30.310.50:FF:000005">
    <property type="entry name" value="L antigen family member 3"/>
    <property type="match status" value="1"/>
</dbReference>
<dbReference type="Gene3D" id="3.30.310.50">
    <property type="entry name" value="Alpha-D-phosphohexomutase, C-terminal domain"/>
    <property type="match status" value="1"/>
</dbReference>
<dbReference type="InterPro" id="IPR015419">
    <property type="entry name" value="CTAG/Pcc1"/>
</dbReference>
<dbReference type="PANTHER" id="PTHR31283">
    <property type="entry name" value="EKC/KEOPS COMPLEX SUBUNIT PCC1 FAMILY MEMBER"/>
    <property type="match status" value="1"/>
</dbReference>
<dbReference type="PANTHER" id="PTHR31283:SF19">
    <property type="entry name" value="EKC_KEOPS COMPLEX SUBUNIT LAGE3"/>
    <property type="match status" value="1"/>
</dbReference>
<dbReference type="Pfam" id="PF09341">
    <property type="entry name" value="Pcc1"/>
    <property type="match status" value="1"/>
</dbReference>